<accession>A7ZYG2</accession>
<reference key="1">
    <citation type="journal article" date="2008" name="J. Bacteriol.">
        <title>The pangenome structure of Escherichia coli: comparative genomic analysis of E. coli commensal and pathogenic isolates.</title>
        <authorList>
            <person name="Rasko D.A."/>
            <person name="Rosovitz M.J."/>
            <person name="Myers G.S.A."/>
            <person name="Mongodin E.F."/>
            <person name="Fricke W.F."/>
            <person name="Gajer P."/>
            <person name="Crabtree J."/>
            <person name="Sebaihia M."/>
            <person name="Thomson N.R."/>
            <person name="Chaudhuri R."/>
            <person name="Henderson I.R."/>
            <person name="Sperandio V."/>
            <person name="Ravel J."/>
        </authorList>
    </citation>
    <scope>NUCLEOTIDE SEQUENCE [LARGE SCALE GENOMIC DNA]</scope>
    <source>
        <strain>HS</strain>
    </source>
</reference>
<name>RLMC_ECOHS</name>
<keyword id="KW-0004">4Fe-4S</keyword>
<keyword id="KW-0408">Iron</keyword>
<keyword id="KW-0411">Iron-sulfur</keyword>
<keyword id="KW-0479">Metal-binding</keyword>
<keyword id="KW-0489">Methyltransferase</keyword>
<keyword id="KW-0698">rRNA processing</keyword>
<keyword id="KW-0949">S-adenosyl-L-methionine</keyword>
<keyword id="KW-0808">Transferase</keyword>
<organism>
    <name type="scientific">Escherichia coli O9:H4 (strain HS)</name>
    <dbReference type="NCBI Taxonomy" id="331112"/>
    <lineage>
        <taxon>Bacteria</taxon>
        <taxon>Pseudomonadati</taxon>
        <taxon>Pseudomonadota</taxon>
        <taxon>Gammaproteobacteria</taxon>
        <taxon>Enterobacterales</taxon>
        <taxon>Enterobacteriaceae</taxon>
        <taxon>Escherichia</taxon>
    </lineage>
</organism>
<evidence type="ECO:0000255" key="1">
    <source>
        <dbReference type="HAMAP-Rule" id="MF_01012"/>
    </source>
</evidence>
<protein>
    <recommendedName>
        <fullName evidence="1">23S rRNA (uracil(747)-C(5))-methyltransferase RlmC</fullName>
        <ecNumber evidence="1">2.1.1.189</ecNumber>
    </recommendedName>
    <alternativeName>
        <fullName evidence="1">23S rRNA(m5U747)-methyltransferase</fullName>
    </alternativeName>
</protein>
<comment type="function">
    <text evidence="1">Catalyzes the formation of 5-methyl-uridine at position 747 (m5U747) in 23S rRNA.</text>
</comment>
<comment type="catalytic activity">
    <reaction evidence="1">
        <text>uridine(747) in 23S rRNA + S-adenosyl-L-methionine = 5-methyluridine(747) in 23S rRNA + S-adenosyl-L-homocysteine + H(+)</text>
        <dbReference type="Rhea" id="RHEA:42628"/>
        <dbReference type="Rhea" id="RHEA-COMP:10154"/>
        <dbReference type="Rhea" id="RHEA-COMP:10155"/>
        <dbReference type="ChEBI" id="CHEBI:15378"/>
        <dbReference type="ChEBI" id="CHEBI:57856"/>
        <dbReference type="ChEBI" id="CHEBI:59789"/>
        <dbReference type="ChEBI" id="CHEBI:65315"/>
        <dbReference type="ChEBI" id="CHEBI:74447"/>
        <dbReference type="EC" id="2.1.1.189"/>
    </reaction>
</comment>
<comment type="similarity">
    <text evidence="1">Belongs to the class I-like SAM-binding methyltransferase superfamily. RNA M5U methyltransferase family. RlmC subfamily.</text>
</comment>
<feature type="chain" id="PRO_1000062999" description="23S rRNA (uracil(747)-C(5))-methyltransferase RlmC">
    <location>
        <begin position="1"/>
        <end position="375"/>
    </location>
</feature>
<feature type="active site" description="Nucleophile" evidence="1">
    <location>
        <position position="334"/>
    </location>
</feature>
<feature type="binding site" evidence="1">
    <location>
        <position position="3"/>
    </location>
    <ligand>
        <name>[4Fe-4S] cluster</name>
        <dbReference type="ChEBI" id="CHEBI:49883"/>
    </ligand>
</feature>
<feature type="binding site" evidence="1">
    <location>
        <position position="11"/>
    </location>
    <ligand>
        <name>[4Fe-4S] cluster</name>
        <dbReference type="ChEBI" id="CHEBI:49883"/>
    </ligand>
</feature>
<feature type="binding site" evidence="1">
    <location>
        <position position="14"/>
    </location>
    <ligand>
        <name>[4Fe-4S] cluster</name>
        <dbReference type="ChEBI" id="CHEBI:49883"/>
    </ligand>
</feature>
<feature type="binding site" evidence="1">
    <location>
        <position position="87"/>
    </location>
    <ligand>
        <name>[4Fe-4S] cluster</name>
        <dbReference type="ChEBI" id="CHEBI:49883"/>
    </ligand>
</feature>
<feature type="binding site" evidence="1">
    <location>
        <position position="212"/>
    </location>
    <ligand>
        <name>S-adenosyl-L-methionine</name>
        <dbReference type="ChEBI" id="CHEBI:59789"/>
    </ligand>
</feature>
<feature type="binding site" evidence="1">
    <location>
        <position position="241"/>
    </location>
    <ligand>
        <name>S-adenosyl-L-methionine</name>
        <dbReference type="ChEBI" id="CHEBI:59789"/>
    </ligand>
</feature>
<feature type="binding site" evidence="1">
    <location>
        <position position="262"/>
    </location>
    <ligand>
        <name>S-adenosyl-L-methionine</name>
        <dbReference type="ChEBI" id="CHEBI:59789"/>
    </ligand>
</feature>
<feature type="binding site" evidence="1">
    <location>
        <position position="307"/>
    </location>
    <ligand>
        <name>S-adenosyl-L-methionine</name>
        <dbReference type="ChEBI" id="CHEBI:59789"/>
    </ligand>
</feature>
<gene>
    <name evidence="1" type="primary">rlmC</name>
    <name type="synonym">rumB</name>
    <name type="ordered locus">EcHS_A0962</name>
</gene>
<dbReference type="EC" id="2.1.1.189" evidence="1"/>
<dbReference type="EMBL" id="CP000802">
    <property type="protein sequence ID" value="ABV05316.1"/>
    <property type="molecule type" value="Genomic_DNA"/>
</dbReference>
<dbReference type="RefSeq" id="WP_001149740.1">
    <property type="nucleotide sequence ID" value="NC_009800.1"/>
</dbReference>
<dbReference type="SMR" id="A7ZYG2"/>
<dbReference type="KEGG" id="ecx:EcHS_A0962"/>
<dbReference type="HOGENOM" id="CLU_014689_0_0_6"/>
<dbReference type="GO" id="GO:0051539">
    <property type="term" value="F:4 iron, 4 sulfur cluster binding"/>
    <property type="evidence" value="ECO:0007669"/>
    <property type="project" value="UniProtKB-KW"/>
</dbReference>
<dbReference type="GO" id="GO:0005506">
    <property type="term" value="F:iron ion binding"/>
    <property type="evidence" value="ECO:0007669"/>
    <property type="project" value="UniProtKB-UniRule"/>
</dbReference>
<dbReference type="GO" id="GO:0070041">
    <property type="term" value="F:rRNA (uridine-C5-)-methyltransferase activity"/>
    <property type="evidence" value="ECO:0007669"/>
    <property type="project" value="UniProtKB-UniRule"/>
</dbReference>
<dbReference type="GO" id="GO:0070475">
    <property type="term" value="P:rRNA base methylation"/>
    <property type="evidence" value="ECO:0007669"/>
    <property type="project" value="TreeGrafter"/>
</dbReference>
<dbReference type="CDD" id="cd02440">
    <property type="entry name" value="AdoMet_MTases"/>
    <property type="match status" value="1"/>
</dbReference>
<dbReference type="FunFam" id="2.40.50.1070:FF:000002">
    <property type="entry name" value="23S rRNA (uracil(747)-C(5))-methyltransferase RlmC"/>
    <property type="match status" value="1"/>
</dbReference>
<dbReference type="FunFam" id="3.40.50.150:FF:000049">
    <property type="entry name" value="23S rRNA (uracil(747)-C(5))-methyltransferase RlmC"/>
    <property type="match status" value="1"/>
</dbReference>
<dbReference type="Gene3D" id="2.40.50.1070">
    <property type="match status" value="1"/>
</dbReference>
<dbReference type="Gene3D" id="3.40.50.150">
    <property type="entry name" value="Vaccinia Virus protein VP39"/>
    <property type="match status" value="1"/>
</dbReference>
<dbReference type="HAMAP" id="MF_01012">
    <property type="entry name" value="23SrRNA_methyltr_RlmC"/>
    <property type="match status" value="1"/>
</dbReference>
<dbReference type="InterPro" id="IPR011825">
    <property type="entry name" value="23SrRNA_MeTrfase_RlmC"/>
</dbReference>
<dbReference type="InterPro" id="IPR030390">
    <property type="entry name" value="MeTrfase_TrmA_AS"/>
</dbReference>
<dbReference type="InterPro" id="IPR030391">
    <property type="entry name" value="MeTrfase_TrmA_CS"/>
</dbReference>
<dbReference type="InterPro" id="IPR029063">
    <property type="entry name" value="SAM-dependent_MTases_sf"/>
</dbReference>
<dbReference type="InterPro" id="IPR010280">
    <property type="entry name" value="U5_MeTrfase_fam"/>
</dbReference>
<dbReference type="NCBIfam" id="TIGR02085">
    <property type="entry name" value="meth_trns_rumB"/>
    <property type="match status" value="1"/>
</dbReference>
<dbReference type="PANTHER" id="PTHR11061">
    <property type="entry name" value="RNA M5U METHYLTRANSFERASE"/>
    <property type="match status" value="1"/>
</dbReference>
<dbReference type="PANTHER" id="PTHR11061:SF30">
    <property type="entry name" value="TRNA (URACIL(54)-C(5))-METHYLTRANSFERASE"/>
    <property type="match status" value="1"/>
</dbReference>
<dbReference type="Pfam" id="PF05958">
    <property type="entry name" value="tRNA_U5-meth_tr"/>
    <property type="match status" value="1"/>
</dbReference>
<dbReference type="SUPFAM" id="SSF53335">
    <property type="entry name" value="S-adenosyl-L-methionine-dependent methyltransferases"/>
    <property type="match status" value="1"/>
</dbReference>
<dbReference type="PROSITE" id="PS51687">
    <property type="entry name" value="SAM_MT_RNA_M5U"/>
    <property type="match status" value="1"/>
</dbReference>
<dbReference type="PROSITE" id="PS01230">
    <property type="entry name" value="TRMA_1"/>
    <property type="match status" value="1"/>
</dbReference>
<dbReference type="PROSITE" id="PS01231">
    <property type="entry name" value="TRMA_2"/>
    <property type="match status" value="1"/>
</dbReference>
<proteinExistence type="inferred from homology"/>
<sequence>MQCALYDAGRCRSCQWITQPIPEQLSAKTADLKNLLADFPVEEWCAPVSGPEQGFRNKAKMVVSGSVEKPLLGMLHRDGTPEDLCDCPLYPASFAPVFAALKPFIARAGLTPYNVARKRGELKYILLTESQSDGGMMLRFVLRSETKLAQLRKALPWLQEQLPQLKVITVNIQPVHMAIMEGETEIYLTEQQALAERFNDVPLWVRPQSFFQTNPAVASQLYATARDWVRQLPVKHMWDLFCGVGGFGLHCATPDMQLTGIEIAPEAIACAKQSAAELGLTRLQFQALDSTQFATAQGEVPELVLVNPPRRGIGKPLCDYLSTMAPRFIIYSSCNAQTMAKDVRELPGYRIERVQLFDMFPHTAHYEVLTLLVKQ</sequence>